<feature type="chain" id="PRO_0000181658" description="tRNA(Ile)-lysidine synthase">
    <location>
        <begin position="1"/>
        <end position="440"/>
    </location>
</feature>
<feature type="binding site" evidence="1">
    <location>
        <begin position="31"/>
        <end position="36"/>
    </location>
    <ligand>
        <name>ATP</name>
        <dbReference type="ChEBI" id="CHEBI:30616"/>
    </ligand>
</feature>
<keyword id="KW-0067">ATP-binding</keyword>
<keyword id="KW-0963">Cytoplasm</keyword>
<keyword id="KW-0436">Ligase</keyword>
<keyword id="KW-0547">Nucleotide-binding</keyword>
<keyword id="KW-0819">tRNA processing</keyword>
<evidence type="ECO:0000255" key="1">
    <source>
        <dbReference type="HAMAP-Rule" id="MF_01161"/>
    </source>
</evidence>
<reference key="1">
    <citation type="journal article" date="2004" name="Nucleic Acids Res.">
        <title>Comparative analysis of the Borrelia garinii genome.</title>
        <authorList>
            <person name="Gloeckner G."/>
            <person name="Lehmann R."/>
            <person name="Romualdi A."/>
            <person name="Pradella S."/>
            <person name="Schulte-Spechtel U."/>
            <person name="Schilhabel M."/>
            <person name="Wilske B."/>
            <person name="Suehnel J."/>
            <person name="Platzer M."/>
        </authorList>
    </citation>
    <scope>NUCLEOTIDE SEQUENCE [LARGE SCALE GENOMIC DNA]</scope>
    <source>
        <strain>ATCC BAA-2496 / DSM 23469 / PBi</strain>
    </source>
</reference>
<comment type="function">
    <text evidence="1">Ligates lysine onto the cytidine present at position 34 of the AUA codon-specific tRNA(Ile) that contains the anticodon CAU, in an ATP-dependent manner. Cytidine is converted to lysidine, thus changing the amino acid specificity of the tRNA from methionine to isoleucine.</text>
</comment>
<comment type="catalytic activity">
    <reaction evidence="1">
        <text>cytidine(34) in tRNA(Ile2) + L-lysine + ATP = lysidine(34) in tRNA(Ile2) + AMP + diphosphate + H(+)</text>
        <dbReference type="Rhea" id="RHEA:43744"/>
        <dbReference type="Rhea" id="RHEA-COMP:10625"/>
        <dbReference type="Rhea" id="RHEA-COMP:10670"/>
        <dbReference type="ChEBI" id="CHEBI:15378"/>
        <dbReference type="ChEBI" id="CHEBI:30616"/>
        <dbReference type="ChEBI" id="CHEBI:32551"/>
        <dbReference type="ChEBI" id="CHEBI:33019"/>
        <dbReference type="ChEBI" id="CHEBI:82748"/>
        <dbReference type="ChEBI" id="CHEBI:83665"/>
        <dbReference type="ChEBI" id="CHEBI:456215"/>
        <dbReference type="EC" id="6.3.4.19"/>
    </reaction>
</comment>
<comment type="subcellular location">
    <subcellularLocation>
        <location evidence="1">Cytoplasm</location>
    </subcellularLocation>
</comment>
<comment type="domain">
    <text>The N-terminal region contains the highly conserved SGGXDS motif, predicted to be a P-loop motif involved in ATP binding.</text>
</comment>
<comment type="similarity">
    <text evidence="1">Belongs to the tRNA(Ile)-lysidine synthase family.</text>
</comment>
<gene>
    <name evidence="1" type="primary">tilS</name>
    <name type="ordered locus">BG0813</name>
</gene>
<sequence length="440" mass="51695">MHFLDDNIQIKIDKFYKKNSLNKNRVIVAFSGGADSTTLLLNLKYYLSNNIVAFYFAHFIRTDNEQNKEIEHVKGFCDLYNIALQVKKCDIDIKSESVRLGVSIEELARKCRYNALENALKENDANYIALAHNENDQIETIIMRFFQGSFLDGLSGIPGVNKNIIRPLLEVSRLEIENFLSLNNISFFVDSTNAQDLYLRNRVRNNLLPSIEKIFKGYQKCLKRISEFSKEFVDYFEKDEFFPVEKGKYYYSFDLKTFLNFPKYLVFRLIFKILNSEGIVAKVSYKALNEAFKVEINRKKNNVLLKTNDFFLEKRHNKINLIFKRDEKFYKPFDFILEVGKWHSLSLGKILLKCLECNTSSVSRLKCCSYEFRYKFFKDRFKAKKFFSKFIRCNPIYLMLLALDNRLIGIIDLNTLNLVWSEKSILKKISISLIGGLLKE</sequence>
<name>TILS_BORGP</name>
<proteinExistence type="inferred from homology"/>
<dbReference type="EC" id="6.3.4.19" evidence="1"/>
<dbReference type="EMBL" id="CP000013">
    <property type="protein sequence ID" value="AAU07635.1"/>
    <property type="molecule type" value="Genomic_DNA"/>
</dbReference>
<dbReference type="RefSeq" id="WP_011194080.1">
    <property type="nucleotide sequence ID" value="NZ_CP028872.1"/>
</dbReference>
<dbReference type="SMR" id="Q65ZY6"/>
<dbReference type="GeneID" id="45161588"/>
<dbReference type="KEGG" id="bga:BG0813"/>
<dbReference type="eggNOG" id="COG0037">
    <property type="taxonomic scope" value="Bacteria"/>
</dbReference>
<dbReference type="HOGENOM" id="CLU_050646_0_0_12"/>
<dbReference type="OrthoDB" id="9807403at2"/>
<dbReference type="Proteomes" id="UP000002276">
    <property type="component" value="Chromosome"/>
</dbReference>
<dbReference type="GO" id="GO:0005737">
    <property type="term" value="C:cytoplasm"/>
    <property type="evidence" value="ECO:0007669"/>
    <property type="project" value="UniProtKB-SubCell"/>
</dbReference>
<dbReference type="GO" id="GO:0005524">
    <property type="term" value="F:ATP binding"/>
    <property type="evidence" value="ECO:0007669"/>
    <property type="project" value="UniProtKB-UniRule"/>
</dbReference>
<dbReference type="GO" id="GO:0032267">
    <property type="term" value="F:tRNA(Ile)-lysidine synthase activity"/>
    <property type="evidence" value="ECO:0007669"/>
    <property type="project" value="UniProtKB-EC"/>
</dbReference>
<dbReference type="GO" id="GO:0006400">
    <property type="term" value="P:tRNA modification"/>
    <property type="evidence" value="ECO:0007669"/>
    <property type="project" value="UniProtKB-UniRule"/>
</dbReference>
<dbReference type="CDD" id="cd01992">
    <property type="entry name" value="TilS_N"/>
    <property type="match status" value="1"/>
</dbReference>
<dbReference type="Gene3D" id="3.40.50.620">
    <property type="entry name" value="HUPs"/>
    <property type="match status" value="1"/>
</dbReference>
<dbReference type="HAMAP" id="MF_01161">
    <property type="entry name" value="tRNA_Ile_lys_synt"/>
    <property type="match status" value="1"/>
</dbReference>
<dbReference type="InterPro" id="IPR014729">
    <property type="entry name" value="Rossmann-like_a/b/a_fold"/>
</dbReference>
<dbReference type="InterPro" id="IPR011063">
    <property type="entry name" value="TilS/TtcA_N"/>
</dbReference>
<dbReference type="InterPro" id="IPR012094">
    <property type="entry name" value="tRNA_Ile_lys_synt"/>
</dbReference>
<dbReference type="InterPro" id="IPR012795">
    <property type="entry name" value="tRNA_Ile_lys_synt_N"/>
</dbReference>
<dbReference type="NCBIfam" id="TIGR02432">
    <property type="entry name" value="lysidine_TilS_N"/>
    <property type="match status" value="1"/>
</dbReference>
<dbReference type="PANTHER" id="PTHR43033">
    <property type="entry name" value="TRNA(ILE)-LYSIDINE SYNTHASE-RELATED"/>
    <property type="match status" value="1"/>
</dbReference>
<dbReference type="PANTHER" id="PTHR43033:SF1">
    <property type="entry name" value="TRNA(ILE)-LYSIDINE SYNTHASE-RELATED"/>
    <property type="match status" value="1"/>
</dbReference>
<dbReference type="Pfam" id="PF01171">
    <property type="entry name" value="ATP_bind_3"/>
    <property type="match status" value="1"/>
</dbReference>
<dbReference type="SUPFAM" id="SSF52402">
    <property type="entry name" value="Adenine nucleotide alpha hydrolases-like"/>
    <property type="match status" value="1"/>
</dbReference>
<organism>
    <name type="scientific">Borrelia garinii subsp. bavariensis (strain ATCC BAA-2496 / DSM 23469 / PBi)</name>
    <name type="common">Borreliella bavariensis</name>
    <dbReference type="NCBI Taxonomy" id="290434"/>
    <lineage>
        <taxon>Bacteria</taxon>
        <taxon>Pseudomonadati</taxon>
        <taxon>Spirochaetota</taxon>
        <taxon>Spirochaetia</taxon>
        <taxon>Spirochaetales</taxon>
        <taxon>Borreliaceae</taxon>
        <taxon>Borreliella</taxon>
    </lineage>
</organism>
<protein>
    <recommendedName>
        <fullName evidence="1">tRNA(Ile)-lysidine synthase</fullName>
        <ecNumber evidence="1">6.3.4.19</ecNumber>
    </recommendedName>
    <alternativeName>
        <fullName evidence="1">tRNA(Ile)-2-lysyl-cytidine synthase</fullName>
    </alternativeName>
    <alternativeName>
        <fullName evidence="1">tRNA(Ile)-lysidine synthetase</fullName>
    </alternativeName>
</protein>
<accession>Q65ZY6</accession>